<dbReference type="EMBL" id="AF157706">
    <property type="protein sequence ID" value="AAD49626.1"/>
    <property type="molecule type" value="Genomic_DNA"/>
</dbReference>
<dbReference type="RefSeq" id="NP_050190.1">
    <property type="nucleotide sequence ID" value="NC_000898.1"/>
</dbReference>
<dbReference type="GeneID" id="1497009"/>
<dbReference type="KEGG" id="vg:1497009"/>
<dbReference type="Proteomes" id="UP000006930">
    <property type="component" value="Segment"/>
</dbReference>
<dbReference type="GO" id="GO:0033644">
    <property type="term" value="C:host cell membrane"/>
    <property type="evidence" value="ECO:0007669"/>
    <property type="project" value="UniProtKB-SubCell"/>
</dbReference>
<dbReference type="GO" id="GO:0016020">
    <property type="term" value="C:membrane"/>
    <property type="evidence" value="ECO:0007669"/>
    <property type="project" value="UniProtKB-KW"/>
</dbReference>
<feature type="chain" id="PRO_0000408460" description="Protein U9">
    <location>
        <begin position="1"/>
        <end position="104"/>
    </location>
</feature>
<feature type="transmembrane region" description="Helical" evidence="1">
    <location>
        <begin position="37"/>
        <end position="54"/>
    </location>
</feature>
<organismHost>
    <name type="scientific">Homo sapiens</name>
    <name type="common">Human</name>
    <dbReference type="NCBI Taxonomy" id="9606"/>
</organismHost>
<reference key="1">
    <citation type="journal article" date="1999" name="J. Virol.">
        <title>Human herpesvirus 6B genome sequence: coding content and comparison with human herpesvirus 6A.</title>
        <authorList>
            <person name="Dominguez G."/>
            <person name="Dambaugh T.R."/>
            <person name="Stamey F.R."/>
            <person name="Dewhurst S."/>
            <person name="Inoue N."/>
            <person name="Pellett P.E."/>
        </authorList>
    </citation>
    <scope>NUCLEOTIDE SEQUENCE [LARGE SCALE GENOMIC DNA]</scope>
</reference>
<name>VU9_HHV6Z</name>
<gene>
    <name type="primary">U9</name>
</gene>
<evidence type="ECO:0000255" key="1"/>
<evidence type="ECO:0000305" key="2"/>
<comment type="subcellular location">
    <subcellularLocation>
        <location evidence="2">Host membrane</location>
        <topology evidence="2">Single-pass membrane protein</topology>
    </subcellularLocation>
</comment>
<keyword id="KW-1043">Host membrane</keyword>
<keyword id="KW-0472">Membrane</keyword>
<keyword id="KW-1185">Reference proteome</keyword>
<keyword id="KW-0812">Transmembrane</keyword>
<keyword id="KW-1133">Transmembrane helix</keyword>
<organism>
    <name type="scientific">Human herpesvirus 6B (strain Z29)</name>
    <name type="common">HHV-6 variant B</name>
    <name type="synonym">Human B lymphotropic virus</name>
    <dbReference type="NCBI Taxonomy" id="36351"/>
    <lineage>
        <taxon>Viruses</taxon>
        <taxon>Duplodnaviria</taxon>
        <taxon>Heunggongvirae</taxon>
        <taxon>Peploviricota</taxon>
        <taxon>Herviviricetes</taxon>
        <taxon>Herpesvirales</taxon>
        <taxon>Orthoherpesviridae</taxon>
        <taxon>Betaherpesvirinae</taxon>
        <taxon>Roseolovirus</taxon>
        <taxon>Roseolovirus humanbeta6b</taxon>
        <taxon>Human herpesvirus 6B</taxon>
    </lineage>
</organism>
<protein>
    <recommendedName>
        <fullName>Protein U9</fullName>
    </recommendedName>
</protein>
<sequence length="104" mass="11644">MAVRKLWKTVVQLFSKSKSEECNTEAGTMEVSCLKYGVQGLNADCSYVKSQCIKLSECECLYTFASDVCKEDFHNSEEMKVFVVQHSQEIVGGTDFSVHAEESV</sequence>
<accession>P0DTO5</accession>
<accession>Q77PV6</accession>
<accession>Q9WT55</accession>
<proteinExistence type="predicted"/>